<comment type="function">
    <text>Reversible hydration of carbon dioxide.</text>
</comment>
<comment type="catalytic activity">
    <reaction>
        <text>hydrogencarbonate + H(+) = CO2 + H2O</text>
        <dbReference type="Rhea" id="RHEA:10748"/>
        <dbReference type="ChEBI" id="CHEBI:15377"/>
        <dbReference type="ChEBI" id="CHEBI:15378"/>
        <dbReference type="ChEBI" id="CHEBI:16526"/>
        <dbReference type="ChEBI" id="CHEBI:17544"/>
        <dbReference type="EC" id="4.2.1.1"/>
    </reaction>
</comment>
<comment type="cofactor">
    <cofactor evidence="12">
        <name>Zn(2+)</name>
        <dbReference type="ChEBI" id="CHEBI:29105"/>
    </cofactor>
</comment>
<comment type="activity regulation">
    <text evidence="4 5 6 7 8 9 10 11">Activated by histamine, L-adrenaline, L- and D-histidine, and L- and D-phenylalanine. Inhibited by coumarins, saccharin, sulfonamide derivatives such as acetazolamide (AZA) and Foscarnet (phosphonoformate trisodium salt).</text>
</comment>
<comment type="biophysicochemical properties">
    <kinetics>
        <KM evidence="9">7.9 mM for CO(2)</KM>
    </kinetics>
</comment>
<comment type="subcellular location">
    <subcellularLocation>
        <location evidence="13">Membrane</location>
        <topology evidence="13">Single-pass type I membrane protein</topology>
    </subcellularLocation>
</comment>
<comment type="tissue specificity">
    <text>High expression in all parts of the central nervous system and lower expression in adult liver, heart, small intestine, colon, kidney, urinary bladder and skeletal muscle.</text>
</comment>
<comment type="similarity">
    <text evidence="13">Belongs to the alpha-carbonic anhydrase family.</text>
</comment>
<sequence length="337" mass="37668">MLFSALLLEVIWILAADGGQHWTYEGPHGQDHWPASYPECGNNAQSPIDIQTDSVTFDPDLPALQPHGYDQPGTEPLDLHNNGHTVQLSLPSTLYLGGLPRKYVAAQLHLHWGQKGSPGGSEHQINSEATFAELHIVHYDSDSYDSLSEAAERPQGLAVLGILIEVGETKNIAYEHILSHLHEVRHKDQKTSVPPFNLRELLPKQLGQYFRYNGSLTTPPCYQSVLWTVFYRRSQISMEQLEKLQGTLFSTEEEPSKLLVQNYRALQPLNQRMVFASFIQAGSSYTTGEMLSLGVGILVGCLCLLLAVYFIARKIRKKRLENRKSVVFTSAQATTEA</sequence>
<reference key="1">
    <citation type="journal article" date="1999" name="Genomics">
        <title>Human carbonic anhydrase XIV (CA14): cDNA cloning, mRNA expression, and mapping to chromosome 1.</title>
        <authorList>
            <person name="Fujikawa-Adachi K."/>
            <person name="Nishimori I."/>
            <person name="Taguchi T."/>
            <person name="Onishi S."/>
        </authorList>
    </citation>
    <scope>NUCLEOTIDE SEQUENCE [MRNA]</scope>
</reference>
<reference key="2">
    <citation type="journal article" date="2003" name="Genome Res.">
        <title>The secreted protein discovery initiative (SPDI), a large-scale effort to identify novel human secreted and transmembrane proteins: a bioinformatics assessment.</title>
        <authorList>
            <person name="Clark H.F."/>
            <person name="Gurney A.L."/>
            <person name="Abaya E."/>
            <person name="Baker K."/>
            <person name="Baldwin D.T."/>
            <person name="Brush J."/>
            <person name="Chen J."/>
            <person name="Chow B."/>
            <person name="Chui C."/>
            <person name="Crowley C."/>
            <person name="Currell B."/>
            <person name="Deuel B."/>
            <person name="Dowd P."/>
            <person name="Eaton D."/>
            <person name="Foster J.S."/>
            <person name="Grimaldi C."/>
            <person name="Gu Q."/>
            <person name="Hass P.E."/>
            <person name="Heldens S."/>
            <person name="Huang A."/>
            <person name="Kim H.S."/>
            <person name="Klimowski L."/>
            <person name="Jin Y."/>
            <person name="Johnson S."/>
            <person name="Lee J."/>
            <person name="Lewis L."/>
            <person name="Liao D."/>
            <person name="Mark M.R."/>
            <person name="Robbie E."/>
            <person name="Sanchez C."/>
            <person name="Schoenfeld J."/>
            <person name="Seshagiri S."/>
            <person name="Simmons L."/>
            <person name="Singh J."/>
            <person name="Smith V."/>
            <person name="Stinson J."/>
            <person name="Vagts A."/>
            <person name="Vandlen R.L."/>
            <person name="Watanabe C."/>
            <person name="Wieand D."/>
            <person name="Woods K."/>
            <person name="Xie M.-H."/>
            <person name="Yansura D.G."/>
            <person name="Yi S."/>
            <person name="Yu G."/>
            <person name="Yuan J."/>
            <person name="Zhang M."/>
            <person name="Zhang Z."/>
            <person name="Goddard A.D."/>
            <person name="Wood W.I."/>
            <person name="Godowski P.J."/>
            <person name="Gray A.M."/>
        </authorList>
    </citation>
    <scope>NUCLEOTIDE SEQUENCE [LARGE SCALE MRNA]</scope>
</reference>
<reference key="3">
    <citation type="journal article" date="2004" name="Nat. Genet.">
        <title>Complete sequencing and characterization of 21,243 full-length human cDNAs.</title>
        <authorList>
            <person name="Ota T."/>
            <person name="Suzuki Y."/>
            <person name="Nishikawa T."/>
            <person name="Otsuki T."/>
            <person name="Sugiyama T."/>
            <person name="Irie R."/>
            <person name="Wakamatsu A."/>
            <person name="Hayashi K."/>
            <person name="Sato H."/>
            <person name="Nagai K."/>
            <person name="Kimura K."/>
            <person name="Makita H."/>
            <person name="Sekine M."/>
            <person name="Obayashi M."/>
            <person name="Nishi T."/>
            <person name="Shibahara T."/>
            <person name="Tanaka T."/>
            <person name="Ishii S."/>
            <person name="Yamamoto J."/>
            <person name="Saito K."/>
            <person name="Kawai Y."/>
            <person name="Isono Y."/>
            <person name="Nakamura Y."/>
            <person name="Nagahari K."/>
            <person name="Murakami K."/>
            <person name="Yasuda T."/>
            <person name="Iwayanagi T."/>
            <person name="Wagatsuma M."/>
            <person name="Shiratori A."/>
            <person name="Sudo H."/>
            <person name="Hosoiri T."/>
            <person name="Kaku Y."/>
            <person name="Kodaira H."/>
            <person name="Kondo H."/>
            <person name="Sugawara M."/>
            <person name="Takahashi M."/>
            <person name="Kanda K."/>
            <person name="Yokoi T."/>
            <person name="Furuya T."/>
            <person name="Kikkawa E."/>
            <person name="Omura Y."/>
            <person name="Abe K."/>
            <person name="Kamihara K."/>
            <person name="Katsuta N."/>
            <person name="Sato K."/>
            <person name="Tanikawa M."/>
            <person name="Yamazaki M."/>
            <person name="Ninomiya K."/>
            <person name="Ishibashi T."/>
            <person name="Yamashita H."/>
            <person name="Murakawa K."/>
            <person name="Fujimori K."/>
            <person name="Tanai H."/>
            <person name="Kimata M."/>
            <person name="Watanabe M."/>
            <person name="Hiraoka S."/>
            <person name="Chiba Y."/>
            <person name="Ishida S."/>
            <person name="Ono Y."/>
            <person name="Takiguchi S."/>
            <person name="Watanabe S."/>
            <person name="Yosida M."/>
            <person name="Hotuta T."/>
            <person name="Kusano J."/>
            <person name="Kanehori K."/>
            <person name="Takahashi-Fujii A."/>
            <person name="Hara H."/>
            <person name="Tanase T.-O."/>
            <person name="Nomura Y."/>
            <person name="Togiya S."/>
            <person name="Komai F."/>
            <person name="Hara R."/>
            <person name="Takeuchi K."/>
            <person name="Arita M."/>
            <person name="Imose N."/>
            <person name="Musashino K."/>
            <person name="Yuuki H."/>
            <person name="Oshima A."/>
            <person name="Sasaki N."/>
            <person name="Aotsuka S."/>
            <person name="Yoshikawa Y."/>
            <person name="Matsunawa H."/>
            <person name="Ichihara T."/>
            <person name="Shiohata N."/>
            <person name="Sano S."/>
            <person name="Moriya S."/>
            <person name="Momiyama H."/>
            <person name="Satoh N."/>
            <person name="Takami S."/>
            <person name="Terashima Y."/>
            <person name="Suzuki O."/>
            <person name="Nakagawa S."/>
            <person name="Senoh A."/>
            <person name="Mizoguchi H."/>
            <person name="Goto Y."/>
            <person name="Shimizu F."/>
            <person name="Wakebe H."/>
            <person name="Hishigaki H."/>
            <person name="Watanabe T."/>
            <person name="Sugiyama A."/>
            <person name="Takemoto M."/>
            <person name="Kawakami B."/>
            <person name="Yamazaki M."/>
            <person name="Watanabe K."/>
            <person name="Kumagai A."/>
            <person name="Itakura S."/>
            <person name="Fukuzumi Y."/>
            <person name="Fujimori Y."/>
            <person name="Komiyama M."/>
            <person name="Tashiro H."/>
            <person name="Tanigami A."/>
            <person name="Fujiwara T."/>
            <person name="Ono T."/>
            <person name="Yamada K."/>
            <person name="Fujii Y."/>
            <person name="Ozaki K."/>
            <person name="Hirao M."/>
            <person name="Ohmori Y."/>
            <person name="Kawabata A."/>
            <person name="Hikiji T."/>
            <person name="Kobatake N."/>
            <person name="Inagaki H."/>
            <person name="Ikema Y."/>
            <person name="Okamoto S."/>
            <person name="Okitani R."/>
            <person name="Kawakami T."/>
            <person name="Noguchi S."/>
            <person name="Itoh T."/>
            <person name="Shigeta K."/>
            <person name="Senba T."/>
            <person name="Matsumura K."/>
            <person name="Nakajima Y."/>
            <person name="Mizuno T."/>
            <person name="Morinaga M."/>
            <person name="Sasaki M."/>
            <person name="Togashi T."/>
            <person name="Oyama M."/>
            <person name="Hata H."/>
            <person name="Watanabe M."/>
            <person name="Komatsu T."/>
            <person name="Mizushima-Sugano J."/>
            <person name="Satoh T."/>
            <person name="Shirai Y."/>
            <person name="Takahashi Y."/>
            <person name="Nakagawa K."/>
            <person name="Okumura K."/>
            <person name="Nagase T."/>
            <person name="Nomura N."/>
            <person name="Kikuchi H."/>
            <person name="Masuho Y."/>
            <person name="Yamashita R."/>
            <person name="Nakai K."/>
            <person name="Yada T."/>
            <person name="Nakamura Y."/>
            <person name="Ohara O."/>
            <person name="Isogai T."/>
            <person name="Sugano S."/>
        </authorList>
    </citation>
    <scope>NUCLEOTIDE SEQUENCE [LARGE SCALE MRNA]</scope>
</reference>
<reference key="4">
    <citation type="submission" date="2003-05" db="EMBL/GenBank/DDBJ databases">
        <title>Cloning of human full-length CDSs in BD Creator(TM) system donor vector.</title>
        <authorList>
            <person name="Kalnine N."/>
            <person name="Chen X."/>
            <person name="Rolfs A."/>
            <person name="Halleck A."/>
            <person name="Hines L."/>
            <person name="Eisenstein S."/>
            <person name="Koundinya M."/>
            <person name="Raphael J."/>
            <person name="Moreira D."/>
            <person name="Kelley T."/>
            <person name="LaBaer J."/>
            <person name="Lin Y."/>
            <person name="Phelan M."/>
            <person name="Farmer A."/>
        </authorList>
    </citation>
    <scope>NUCLEOTIDE SEQUENCE [LARGE SCALE MRNA]</scope>
</reference>
<reference key="5">
    <citation type="journal article" date="2006" name="Nature">
        <title>The DNA sequence and biological annotation of human chromosome 1.</title>
        <authorList>
            <person name="Gregory S.G."/>
            <person name="Barlow K.F."/>
            <person name="McLay K.E."/>
            <person name="Kaul R."/>
            <person name="Swarbreck D."/>
            <person name="Dunham A."/>
            <person name="Scott C.E."/>
            <person name="Howe K.L."/>
            <person name="Woodfine K."/>
            <person name="Spencer C.C.A."/>
            <person name="Jones M.C."/>
            <person name="Gillson C."/>
            <person name="Searle S."/>
            <person name="Zhou Y."/>
            <person name="Kokocinski F."/>
            <person name="McDonald L."/>
            <person name="Evans R."/>
            <person name="Phillips K."/>
            <person name="Atkinson A."/>
            <person name="Cooper R."/>
            <person name="Jones C."/>
            <person name="Hall R.E."/>
            <person name="Andrews T.D."/>
            <person name="Lloyd C."/>
            <person name="Ainscough R."/>
            <person name="Almeida J.P."/>
            <person name="Ambrose K.D."/>
            <person name="Anderson F."/>
            <person name="Andrew R.W."/>
            <person name="Ashwell R.I.S."/>
            <person name="Aubin K."/>
            <person name="Babbage A.K."/>
            <person name="Bagguley C.L."/>
            <person name="Bailey J."/>
            <person name="Beasley H."/>
            <person name="Bethel G."/>
            <person name="Bird C.P."/>
            <person name="Bray-Allen S."/>
            <person name="Brown J.Y."/>
            <person name="Brown A.J."/>
            <person name="Buckley D."/>
            <person name="Burton J."/>
            <person name="Bye J."/>
            <person name="Carder C."/>
            <person name="Chapman J.C."/>
            <person name="Clark S.Y."/>
            <person name="Clarke G."/>
            <person name="Clee C."/>
            <person name="Cobley V."/>
            <person name="Collier R.E."/>
            <person name="Corby N."/>
            <person name="Coville G.J."/>
            <person name="Davies J."/>
            <person name="Deadman R."/>
            <person name="Dunn M."/>
            <person name="Earthrowl M."/>
            <person name="Ellington A.G."/>
            <person name="Errington H."/>
            <person name="Frankish A."/>
            <person name="Frankland J."/>
            <person name="French L."/>
            <person name="Garner P."/>
            <person name="Garnett J."/>
            <person name="Gay L."/>
            <person name="Ghori M.R.J."/>
            <person name="Gibson R."/>
            <person name="Gilby L.M."/>
            <person name="Gillett W."/>
            <person name="Glithero R.J."/>
            <person name="Grafham D.V."/>
            <person name="Griffiths C."/>
            <person name="Griffiths-Jones S."/>
            <person name="Grocock R."/>
            <person name="Hammond S."/>
            <person name="Harrison E.S.I."/>
            <person name="Hart E."/>
            <person name="Haugen E."/>
            <person name="Heath P.D."/>
            <person name="Holmes S."/>
            <person name="Holt K."/>
            <person name="Howden P.J."/>
            <person name="Hunt A.R."/>
            <person name="Hunt S.E."/>
            <person name="Hunter G."/>
            <person name="Isherwood J."/>
            <person name="James R."/>
            <person name="Johnson C."/>
            <person name="Johnson D."/>
            <person name="Joy A."/>
            <person name="Kay M."/>
            <person name="Kershaw J.K."/>
            <person name="Kibukawa M."/>
            <person name="Kimberley A.M."/>
            <person name="King A."/>
            <person name="Knights A.J."/>
            <person name="Lad H."/>
            <person name="Laird G."/>
            <person name="Lawlor S."/>
            <person name="Leongamornlert D.A."/>
            <person name="Lloyd D.M."/>
            <person name="Loveland J."/>
            <person name="Lovell J."/>
            <person name="Lush M.J."/>
            <person name="Lyne R."/>
            <person name="Martin S."/>
            <person name="Mashreghi-Mohammadi M."/>
            <person name="Matthews L."/>
            <person name="Matthews N.S.W."/>
            <person name="McLaren S."/>
            <person name="Milne S."/>
            <person name="Mistry S."/>
            <person name="Moore M.J.F."/>
            <person name="Nickerson T."/>
            <person name="O'Dell C.N."/>
            <person name="Oliver K."/>
            <person name="Palmeiri A."/>
            <person name="Palmer S.A."/>
            <person name="Parker A."/>
            <person name="Patel D."/>
            <person name="Pearce A.V."/>
            <person name="Peck A.I."/>
            <person name="Pelan S."/>
            <person name="Phelps K."/>
            <person name="Phillimore B.J."/>
            <person name="Plumb R."/>
            <person name="Rajan J."/>
            <person name="Raymond C."/>
            <person name="Rouse G."/>
            <person name="Saenphimmachak C."/>
            <person name="Sehra H.K."/>
            <person name="Sheridan E."/>
            <person name="Shownkeen R."/>
            <person name="Sims S."/>
            <person name="Skuce C.D."/>
            <person name="Smith M."/>
            <person name="Steward C."/>
            <person name="Subramanian S."/>
            <person name="Sycamore N."/>
            <person name="Tracey A."/>
            <person name="Tromans A."/>
            <person name="Van Helmond Z."/>
            <person name="Wall M."/>
            <person name="Wallis J.M."/>
            <person name="White S."/>
            <person name="Whitehead S.L."/>
            <person name="Wilkinson J.E."/>
            <person name="Willey D.L."/>
            <person name="Williams H."/>
            <person name="Wilming L."/>
            <person name="Wray P.W."/>
            <person name="Wu Z."/>
            <person name="Coulson A."/>
            <person name="Vaudin M."/>
            <person name="Sulston J.E."/>
            <person name="Durbin R.M."/>
            <person name="Hubbard T."/>
            <person name="Wooster R."/>
            <person name="Dunham I."/>
            <person name="Carter N.P."/>
            <person name="McVean G."/>
            <person name="Ross M.T."/>
            <person name="Harrow J."/>
            <person name="Olson M.V."/>
            <person name="Beck S."/>
            <person name="Rogers J."/>
            <person name="Bentley D.R."/>
        </authorList>
    </citation>
    <scope>NUCLEOTIDE SEQUENCE [LARGE SCALE GENOMIC DNA]</scope>
</reference>
<reference key="6">
    <citation type="journal article" date="2004" name="Genome Res.">
        <title>The status, quality, and expansion of the NIH full-length cDNA project: the Mammalian Gene Collection (MGC).</title>
        <authorList>
            <consortium name="The MGC Project Team"/>
        </authorList>
    </citation>
    <scope>NUCLEOTIDE SEQUENCE [LARGE SCALE MRNA]</scope>
    <source>
        <tissue>Brain</tissue>
        <tissue>Lung</tissue>
        <tissue>Testis</tissue>
    </source>
</reference>
<reference key="7">
    <citation type="journal article" date="2006" name="Chemistry">
        <title>Carbonic anhydrase activators. Activation of isozymes I, II, IV, VA, VII, and XIV with l- and d-histidine and crystallographic analysis of their adducts with isoform II: engineering proton-transfer processes within the active site of an enzyme.</title>
        <authorList>
            <person name="Temperini C."/>
            <person name="Scozzafava A."/>
            <person name="Vullo D."/>
            <person name="Supuran C.T."/>
        </authorList>
    </citation>
    <scope>ACTIVITY REGULATION</scope>
</reference>
<reference key="8">
    <citation type="journal article" date="2006" name="J. Med. Chem.">
        <title>Carbonic anhydrase activators. Activation of isoforms I, II, IV, VA, VII, and XIV with L- and D-phenylalanine and crystallographic analysis of their adducts with isozyme II: stereospecific recognition within the active site of an enzyme and its consequences for the drug design.</title>
        <authorList>
            <person name="Temperini C."/>
            <person name="Scozzafava A."/>
            <person name="Vullo D."/>
            <person name="Supuran C.T."/>
        </authorList>
    </citation>
    <scope>ACTIVITY REGULATION</scope>
</reference>
<reference key="9">
    <citation type="journal article" date="2007" name="Angew. Chem. Int. Ed. Engl.">
        <title>Saccharin inhibits carbonic anhydrases: possible explanation for its unpleasant metallic aftertaste.</title>
        <authorList>
            <person name="Koehler K."/>
            <person name="Hillebrecht A."/>
            <person name="Schulze Wischeler J."/>
            <person name="Innocenti A."/>
            <person name="Heine A."/>
            <person name="Supuran C.T."/>
            <person name="Klebe G."/>
        </authorList>
    </citation>
    <scope>ACTIVITY REGULATION</scope>
</reference>
<reference key="10">
    <citation type="journal article" date="2007" name="Bioorg. Med. Chem. Lett.">
        <title>Carbonic anhydrase activators: L-Adrenaline plugs the active site entrance of isozyme II, activating better isoforms I, IV, VA, VII, and XIV.</title>
        <authorList>
            <person name="Temperini C."/>
            <person name="Innocenti A."/>
            <person name="Scozzafava A."/>
            <person name="Mastrolorenzo A."/>
            <person name="Supuran C.T."/>
        </authorList>
    </citation>
    <scope>ACTIVITY REGULATION</scope>
</reference>
<reference key="11">
    <citation type="journal article" date="2007" name="Bioorg. Med. Chem. Lett.">
        <title>Phosph(on)ate as a zinc-binding group in metalloenzyme inhibitors: X-ray crystal structure of the antiviral drug foscarnet complexed to human carbonic anhydrase I.</title>
        <authorList>
            <person name="Temperini C."/>
            <person name="Innocenti A."/>
            <person name="Guerri A."/>
            <person name="Scozzafava A."/>
            <person name="Rusconi S."/>
            <person name="Supuran C.T."/>
        </authorList>
    </citation>
    <scope>ACTIVITY REGULATION</scope>
</reference>
<reference key="12">
    <citation type="journal article" date="2009" name="Bioorg. Med. Chem. Lett.">
        <title>A thiabendazole sulfonamide shows potent inhibitory activity against mammalian and nematode alpha-carbonic anhydrases.</title>
        <authorList>
            <person name="Crocetti L."/>
            <person name="Maresca A."/>
            <person name="Temperini C."/>
            <person name="Hall R.A."/>
            <person name="Scozzafava A."/>
            <person name="Muehlschlegel F.A."/>
            <person name="Supuran C.T."/>
        </authorList>
    </citation>
    <scope>ACTIVITY REGULATION</scope>
</reference>
<reference key="13">
    <citation type="journal article" date="2009" name="J. Am. Chem. Soc.">
        <title>Non-zinc mediated inhibition of carbonic anhydrases: coumarins are a new class of suicide inhibitors.</title>
        <authorList>
            <person name="Maresca A."/>
            <person name="Temperini C."/>
            <person name="Vu H."/>
            <person name="Pham N.B."/>
            <person name="Poulsen S.-A."/>
            <person name="Scozzafava A."/>
            <person name="Quinn R.J."/>
            <person name="Supuran C.T."/>
        </authorList>
    </citation>
    <scope>ACTIVITY REGULATION</scope>
</reference>
<reference key="14">
    <citation type="journal article" date="2009" name="Proteins">
        <title>Crystal structure of human carbonic anhydrase XIII and its complex with the inhibitor acetazolamide.</title>
        <authorList>
            <person name="Di Fiore A."/>
            <person name="Monti S.M."/>
            <person name="Hilvo M."/>
            <person name="Parkkila S."/>
            <person name="Romano V."/>
            <person name="Scaloni A."/>
            <person name="Pedone C."/>
            <person name="Scozzafava A."/>
            <person name="Supuran C.T."/>
            <person name="De Simone G."/>
        </authorList>
    </citation>
    <scope>BIOPHYSICOCHEMICAL PROPERTIES</scope>
    <scope>ACTIVITY REGULATION</scope>
</reference>
<reference key="15">
    <citation type="journal article" date="2011" name="Sci. Signal.">
        <title>System-wide temporal characterization of the proteome and phosphoproteome of human embryonic stem cell differentiation.</title>
        <authorList>
            <person name="Rigbolt K.T."/>
            <person name="Prokhorova T.A."/>
            <person name="Akimov V."/>
            <person name="Henningsen J."/>
            <person name="Johansen P.T."/>
            <person name="Kratchmarova I."/>
            <person name="Kassem M."/>
            <person name="Mann M."/>
            <person name="Olsen J.V."/>
            <person name="Blagoev B."/>
        </authorList>
    </citation>
    <scope>PHOSPHORYLATION [LARGE SCALE ANALYSIS] AT SER-325</scope>
    <scope>IDENTIFICATION BY MASS SPECTROMETRY [LARGE SCALE ANALYSIS]</scope>
</reference>
<reference key="16">
    <citation type="journal article" date="2014" name="J. Proteomics">
        <title>An enzyme assisted RP-RPLC approach for in-depth analysis of human liver phosphoproteome.</title>
        <authorList>
            <person name="Bian Y."/>
            <person name="Song C."/>
            <person name="Cheng K."/>
            <person name="Dong M."/>
            <person name="Wang F."/>
            <person name="Huang J."/>
            <person name="Sun D."/>
            <person name="Wang L."/>
            <person name="Ye M."/>
            <person name="Zou H."/>
        </authorList>
    </citation>
    <scope>IDENTIFICATION BY MASS SPECTROMETRY [LARGE SCALE ANALYSIS]</scope>
    <source>
        <tissue>Liver</tissue>
    </source>
</reference>
<reference key="17">
    <citation type="journal article" date="2014" name="Biopolymers">
        <title>The structural comparison between membrane-associated human carbonic anhydrases provides insights into drug design of selective inhibitors.</title>
        <authorList>
            <person name="Alterio V."/>
            <person name="Pan P."/>
            <person name="Parkkila S."/>
            <person name="Buonanno M."/>
            <person name="Supuran C.T."/>
            <person name="Monti S.M."/>
            <person name="De Simone G."/>
        </authorList>
    </citation>
    <scope>X-RAY CRYSTALLOGRAPHY (2.0 ANGSTROMS) OF 16-290</scope>
    <scope>ZINC-BINDING SITES</scope>
    <scope>GLYCOSYLATION AT ASN-213</scope>
    <scope>DISULFIDE BOND</scope>
</reference>
<protein>
    <recommendedName>
        <fullName>Carbonic anhydrase 14</fullName>
        <ecNumber>4.2.1.1</ecNumber>
    </recommendedName>
    <alternativeName>
        <fullName>Carbonate dehydratase XIV</fullName>
    </alternativeName>
    <alternativeName>
        <fullName>Carbonic anhydrase XIV</fullName>
        <shortName>CA-XIV</shortName>
    </alternativeName>
</protein>
<keyword id="KW-0002">3D-structure</keyword>
<keyword id="KW-1015">Disulfide bond</keyword>
<keyword id="KW-0325">Glycoprotein</keyword>
<keyword id="KW-0456">Lyase</keyword>
<keyword id="KW-0472">Membrane</keyword>
<keyword id="KW-0479">Metal-binding</keyword>
<keyword id="KW-0597">Phosphoprotein</keyword>
<keyword id="KW-1267">Proteomics identification</keyword>
<keyword id="KW-1185">Reference proteome</keyword>
<keyword id="KW-0732">Signal</keyword>
<keyword id="KW-0812">Transmembrane</keyword>
<keyword id="KW-1133">Transmembrane helix</keyword>
<keyword id="KW-0862">Zinc</keyword>
<name>CAH14_HUMAN</name>
<proteinExistence type="evidence at protein level"/>
<evidence type="ECO:0000250" key="1">
    <source>
        <dbReference type="UniProtKB" id="P00918"/>
    </source>
</evidence>
<evidence type="ECO:0000255" key="2"/>
<evidence type="ECO:0000255" key="3">
    <source>
        <dbReference type="PROSITE-ProRule" id="PRU01134"/>
    </source>
</evidence>
<evidence type="ECO:0000269" key="4">
    <source>
    </source>
</evidence>
<evidence type="ECO:0000269" key="5">
    <source>
    </source>
</evidence>
<evidence type="ECO:0000269" key="6">
    <source>
    </source>
</evidence>
<evidence type="ECO:0000269" key="7">
    <source>
    </source>
</evidence>
<evidence type="ECO:0000269" key="8">
    <source>
    </source>
</evidence>
<evidence type="ECO:0000269" key="9">
    <source>
    </source>
</evidence>
<evidence type="ECO:0000269" key="10">
    <source>
    </source>
</evidence>
<evidence type="ECO:0000269" key="11">
    <source>
    </source>
</evidence>
<evidence type="ECO:0000269" key="12">
    <source>
    </source>
</evidence>
<evidence type="ECO:0000305" key="13"/>
<evidence type="ECO:0007744" key="14">
    <source>
    </source>
</evidence>
<evidence type="ECO:0007829" key="15">
    <source>
        <dbReference type="PDB" id="5CJF"/>
    </source>
</evidence>
<feature type="signal peptide" evidence="2">
    <location>
        <begin position="1"/>
        <end position="15"/>
    </location>
</feature>
<feature type="chain" id="PRO_0000004251" description="Carbonic anhydrase 14">
    <location>
        <begin position="16"/>
        <end position="337"/>
    </location>
</feature>
<feature type="topological domain" description="Extracellular" evidence="2">
    <location>
        <begin position="16"/>
        <end position="290"/>
    </location>
</feature>
<feature type="transmembrane region" description="Helical" evidence="2">
    <location>
        <begin position="291"/>
        <end position="311"/>
    </location>
</feature>
<feature type="topological domain" description="Cytoplasmic" evidence="2">
    <location>
        <begin position="312"/>
        <end position="337"/>
    </location>
</feature>
<feature type="domain" description="Alpha-carbonic anhydrase" evidence="3">
    <location>
        <begin position="20"/>
        <end position="278"/>
    </location>
</feature>
<feature type="active site" description="Proton donor/acceptor" evidence="1">
    <location>
        <position position="84"/>
    </location>
</feature>
<feature type="binding site" evidence="12">
    <location>
        <position position="109"/>
    </location>
    <ligand>
        <name>Zn(2+)</name>
        <dbReference type="ChEBI" id="CHEBI:29105"/>
        <note>catalytic</note>
    </ligand>
</feature>
<feature type="binding site" evidence="12">
    <location>
        <position position="111"/>
    </location>
    <ligand>
        <name>Zn(2+)</name>
        <dbReference type="ChEBI" id="CHEBI:29105"/>
        <note>catalytic</note>
    </ligand>
</feature>
<feature type="binding site" evidence="12">
    <location>
        <position position="135"/>
    </location>
    <ligand>
        <name>Zn(2+)</name>
        <dbReference type="ChEBI" id="CHEBI:29105"/>
        <note>catalytic</note>
    </ligand>
</feature>
<feature type="binding site" evidence="1">
    <location>
        <begin position="217"/>
        <end position="218"/>
    </location>
    <ligand>
        <name>substrate</name>
    </ligand>
</feature>
<feature type="modified residue" description="Phosphoserine" evidence="14">
    <location>
        <position position="325"/>
    </location>
</feature>
<feature type="glycosylation site" description="N-linked (GlcNAc...) asparagine" evidence="12">
    <location>
        <position position="213"/>
    </location>
</feature>
<feature type="disulfide bond" evidence="12">
    <location>
        <begin position="40"/>
        <end position="221"/>
    </location>
</feature>
<feature type="sequence conflict" description="In Ref. 3; BAC11191." evidence="13" ref="3">
    <original>V</original>
    <variation>A</variation>
    <location>
        <position position="229"/>
    </location>
</feature>
<feature type="strand" evidence="15">
    <location>
        <begin position="24"/>
        <end position="26"/>
    </location>
</feature>
<feature type="helix" evidence="15">
    <location>
        <begin position="30"/>
        <end position="32"/>
    </location>
</feature>
<feature type="helix" evidence="15">
    <location>
        <begin position="33"/>
        <end position="36"/>
    </location>
</feature>
<feature type="helix" evidence="15">
    <location>
        <begin position="38"/>
        <end position="41"/>
    </location>
</feature>
<feature type="strand" evidence="15">
    <location>
        <begin position="42"/>
        <end position="44"/>
    </location>
</feature>
<feature type="helix" evidence="15">
    <location>
        <begin position="52"/>
        <end position="54"/>
    </location>
</feature>
<feature type="strand" evidence="15">
    <location>
        <begin position="66"/>
        <end position="68"/>
    </location>
</feature>
<feature type="strand" evidence="15">
    <location>
        <begin position="77"/>
        <end position="81"/>
    </location>
</feature>
<feature type="strand" evidence="15">
    <location>
        <begin position="86"/>
        <end position="89"/>
    </location>
</feature>
<feature type="strand" evidence="15">
    <location>
        <begin position="95"/>
        <end position="101"/>
    </location>
</feature>
<feature type="strand" evidence="15">
    <location>
        <begin position="103"/>
        <end position="112"/>
    </location>
</feature>
<feature type="strand" evidence="15">
    <location>
        <begin position="122"/>
        <end position="125"/>
    </location>
</feature>
<feature type="strand" evidence="15">
    <location>
        <begin position="131"/>
        <end position="140"/>
    </location>
</feature>
<feature type="turn" evidence="15">
    <location>
        <begin position="141"/>
        <end position="143"/>
    </location>
</feature>
<feature type="helix" evidence="15">
    <location>
        <begin position="147"/>
        <end position="150"/>
    </location>
</feature>
<feature type="strand" evidence="15">
    <location>
        <begin position="157"/>
        <end position="169"/>
    </location>
</feature>
<feature type="helix" evidence="15">
    <location>
        <begin position="172"/>
        <end position="178"/>
    </location>
</feature>
<feature type="helix" evidence="15">
    <location>
        <begin position="179"/>
        <end position="183"/>
    </location>
</feature>
<feature type="strand" evidence="15">
    <location>
        <begin position="190"/>
        <end position="193"/>
    </location>
</feature>
<feature type="helix" evidence="15">
    <location>
        <begin position="198"/>
        <end position="201"/>
    </location>
</feature>
<feature type="strand" evidence="15">
    <location>
        <begin position="209"/>
        <end position="214"/>
    </location>
</feature>
<feature type="strand" evidence="15">
    <location>
        <begin position="225"/>
        <end position="232"/>
    </location>
</feature>
<feature type="strand" evidence="15">
    <location>
        <begin position="234"/>
        <end position="237"/>
    </location>
</feature>
<feature type="helix" evidence="15">
    <location>
        <begin position="238"/>
        <end position="245"/>
    </location>
</feature>
<feature type="strand" evidence="15">
    <location>
        <begin position="249"/>
        <end position="255"/>
    </location>
</feature>
<feature type="strand" evidence="15">
    <location>
        <begin position="275"/>
        <end position="277"/>
    </location>
</feature>
<organism>
    <name type="scientific">Homo sapiens</name>
    <name type="common">Human</name>
    <dbReference type="NCBI Taxonomy" id="9606"/>
    <lineage>
        <taxon>Eukaryota</taxon>
        <taxon>Metazoa</taxon>
        <taxon>Chordata</taxon>
        <taxon>Craniata</taxon>
        <taxon>Vertebrata</taxon>
        <taxon>Euteleostomi</taxon>
        <taxon>Mammalia</taxon>
        <taxon>Eutheria</taxon>
        <taxon>Euarchontoglires</taxon>
        <taxon>Primates</taxon>
        <taxon>Haplorrhini</taxon>
        <taxon>Catarrhini</taxon>
        <taxon>Hominidae</taxon>
        <taxon>Homo</taxon>
    </lineage>
</organism>
<gene>
    <name type="primary">CA14</name>
    <name type="ORF">UNQ690/PRO1335</name>
</gene>
<accession>Q9ULX7</accession>
<accession>Q5TB24</accession>
<accession>Q8NCF4</accession>
<dbReference type="EC" id="4.2.1.1"/>
<dbReference type="EMBL" id="AB025904">
    <property type="protein sequence ID" value="BAA85002.1"/>
    <property type="molecule type" value="mRNA"/>
</dbReference>
<dbReference type="EMBL" id="AY358689">
    <property type="protein sequence ID" value="AAQ89052.1"/>
    <property type="molecule type" value="mRNA"/>
</dbReference>
<dbReference type="EMBL" id="AK074765">
    <property type="protein sequence ID" value="BAC11191.1"/>
    <property type="molecule type" value="mRNA"/>
</dbReference>
<dbReference type="EMBL" id="BT020054">
    <property type="protein sequence ID" value="AAV38857.1"/>
    <property type="molecule type" value="mRNA"/>
</dbReference>
<dbReference type="EMBL" id="AL138795">
    <property type="protein sequence ID" value="CAI22810.1"/>
    <property type="molecule type" value="Genomic_DNA"/>
</dbReference>
<dbReference type="EMBL" id="BC034412">
    <property type="protein sequence ID" value="AAH34412.1"/>
    <property type="molecule type" value="mRNA"/>
</dbReference>
<dbReference type="CCDS" id="CCDS947.1"/>
<dbReference type="RefSeq" id="NP_036245.1">
    <property type="nucleotide sequence ID" value="NM_012113.3"/>
</dbReference>
<dbReference type="PDB" id="4LU3">
    <property type="method" value="X-ray"/>
    <property type="resolution" value="2.00 A"/>
    <property type="chains" value="A=16-290"/>
</dbReference>
<dbReference type="PDB" id="5CJF">
    <property type="method" value="X-ray"/>
    <property type="resolution" value="1.83 A"/>
    <property type="chains" value="A=16-291"/>
</dbReference>
<dbReference type="PDBsum" id="4LU3"/>
<dbReference type="PDBsum" id="5CJF"/>
<dbReference type="SMR" id="Q9ULX7"/>
<dbReference type="BioGRID" id="117162">
    <property type="interactions" value="77"/>
</dbReference>
<dbReference type="FunCoup" id="Q9ULX7">
    <property type="interactions" value="275"/>
</dbReference>
<dbReference type="IntAct" id="Q9ULX7">
    <property type="interactions" value="63"/>
</dbReference>
<dbReference type="STRING" id="9606.ENSP00000358107"/>
<dbReference type="BindingDB" id="Q9ULX7"/>
<dbReference type="ChEMBL" id="CHEMBL3510"/>
<dbReference type="DrugBank" id="DB08782">
    <property type="generic name" value="4-(2-AMINOETHYL)BENZENESULFONAMIDE"/>
</dbReference>
<dbReference type="DrugBank" id="DB07050">
    <property type="generic name" value="5-[(phenylsulfonyl)amino]-1,3,4-thiadiazole-2-sulfonamide"/>
</dbReference>
<dbReference type="DrugBank" id="DB00819">
    <property type="generic name" value="Acetazolamide"/>
</dbReference>
<dbReference type="DrugBank" id="DB00562">
    <property type="generic name" value="Benzthiazide"/>
</dbReference>
<dbReference type="DrugBank" id="DB03854">
    <property type="generic name" value="Cadaverine"/>
</dbReference>
<dbReference type="DrugBank" id="DB14086">
    <property type="generic name" value="Cianidanol"/>
</dbReference>
<dbReference type="DrugBank" id="DB04665">
    <property type="generic name" value="Coumarin"/>
</dbReference>
<dbReference type="DrugBank" id="DB11672">
    <property type="generic name" value="Curcumin"/>
</dbReference>
<dbReference type="DrugBank" id="DB00606">
    <property type="generic name" value="Cyclothiazide"/>
</dbReference>
<dbReference type="DrugBank" id="DB08846">
    <property type="generic name" value="Ellagic acid"/>
</dbReference>
<dbReference type="DrugBank" id="DB07767">
    <property type="generic name" value="Ferulic acid"/>
</dbReference>
<dbReference type="DrugBank" id="DB03260">
    <property type="generic name" value="Hexamethylene diamine"/>
</dbReference>
<dbReference type="DrugBank" id="DB08165">
    <property type="generic name" value="indane-5-sulfonamide"/>
</dbReference>
<dbReference type="DrugBank" id="DB06795">
    <property type="generic name" value="Mafenide"/>
</dbReference>
<dbReference type="DrugBank" id="DB14144">
    <property type="generic name" value="p-Aminophenol"/>
</dbReference>
<dbReference type="DrugBank" id="DB04066">
    <property type="generic name" value="p-Coumaric acid"/>
</dbReference>
<dbReference type="DrugBank" id="DB03255">
    <property type="generic name" value="Phenol"/>
</dbReference>
<dbReference type="DrugBank" id="DB11085">
    <property type="generic name" value="Resorcinol"/>
</dbReference>
<dbReference type="DrugBank" id="DB00127">
    <property type="generic name" value="Spermine"/>
</dbReference>
<dbReference type="DrugBank" id="DB06824">
    <property type="generic name" value="Triethylenetetramine"/>
</dbReference>
<dbReference type="DrugBank" id="DB00909">
    <property type="generic name" value="Zonisamide"/>
</dbReference>
<dbReference type="DrugCentral" id="Q9ULX7"/>
<dbReference type="GuidetoPHARMACOLOGY" id="2598"/>
<dbReference type="GlyCosmos" id="Q9ULX7">
    <property type="glycosylation" value="1 site, No reported glycans"/>
</dbReference>
<dbReference type="GlyGen" id="Q9ULX7">
    <property type="glycosylation" value="1 site"/>
</dbReference>
<dbReference type="iPTMnet" id="Q9ULX7"/>
<dbReference type="PhosphoSitePlus" id="Q9ULX7"/>
<dbReference type="BioMuta" id="CA14"/>
<dbReference type="DMDM" id="8928036"/>
<dbReference type="jPOST" id="Q9ULX7"/>
<dbReference type="MassIVE" id="Q9ULX7"/>
<dbReference type="PaxDb" id="9606-ENSP00000358107"/>
<dbReference type="PeptideAtlas" id="Q9ULX7"/>
<dbReference type="ProteomicsDB" id="85149"/>
<dbReference type="Antibodypedia" id="2374">
    <property type="antibodies" value="200 antibodies from 30 providers"/>
</dbReference>
<dbReference type="DNASU" id="23632"/>
<dbReference type="Ensembl" id="ENST00000369111.9">
    <property type="protein sequence ID" value="ENSP00000358107.3"/>
    <property type="gene ID" value="ENSG00000118298.12"/>
</dbReference>
<dbReference type="Ensembl" id="ENST00000647854.1">
    <property type="protein sequence ID" value="ENSP00000498013.1"/>
    <property type="gene ID" value="ENSG00000118298.12"/>
</dbReference>
<dbReference type="GeneID" id="23632"/>
<dbReference type="KEGG" id="hsa:23632"/>
<dbReference type="MANE-Select" id="ENST00000369111.9">
    <property type="protein sequence ID" value="ENSP00000358107.3"/>
    <property type="RefSeq nucleotide sequence ID" value="NM_012113.3"/>
    <property type="RefSeq protein sequence ID" value="NP_036245.1"/>
</dbReference>
<dbReference type="UCSC" id="uc001etx.5">
    <property type="organism name" value="human"/>
</dbReference>
<dbReference type="AGR" id="HGNC:1372"/>
<dbReference type="CTD" id="23632"/>
<dbReference type="DisGeNET" id="23632"/>
<dbReference type="GeneCards" id="CA14"/>
<dbReference type="HGNC" id="HGNC:1372">
    <property type="gene designation" value="CA14"/>
</dbReference>
<dbReference type="HPA" id="ENSG00000118298">
    <property type="expression patterns" value="Tissue enhanced (choroid plexus, retina, tongue)"/>
</dbReference>
<dbReference type="MIM" id="604832">
    <property type="type" value="gene"/>
</dbReference>
<dbReference type="neXtProt" id="NX_Q9ULX7"/>
<dbReference type="OpenTargets" id="ENSG00000118298"/>
<dbReference type="PharmGKB" id="PA25988"/>
<dbReference type="VEuPathDB" id="HostDB:ENSG00000118298"/>
<dbReference type="eggNOG" id="KOG0382">
    <property type="taxonomic scope" value="Eukaryota"/>
</dbReference>
<dbReference type="GeneTree" id="ENSGT00940000156893"/>
<dbReference type="HOGENOM" id="CLU_039326_1_2_1"/>
<dbReference type="InParanoid" id="Q9ULX7"/>
<dbReference type="OMA" id="GYDQPST"/>
<dbReference type="OrthoDB" id="429145at2759"/>
<dbReference type="PAN-GO" id="Q9ULX7">
    <property type="GO annotations" value="3 GO annotations based on evolutionary models"/>
</dbReference>
<dbReference type="PhylomeDB" id="Q9ULX7"/>
<dbReference type="TreeFam" id="TF316425"/>
<dbReference type="BRENDA" id="4.2.1.1">
    <property type="organism ID" value="2681"/>
</dbReference>
<dbReference type="PathwayCommons" id="Q9ULX7"/>
<dbReference type="Reactome" id="R-HSA-1475029">
    <property type="pathway name" value="Reversible hydration of carbon dioxide"/>
</dbReference>
<dbReference type="SABIO-RK" id="Q9ULX7"/>
<dbReference type="SignaLink" id="Q9ULX7"/>
<dbReference type="BioGRID-ORCS" id="23632">
    <property type="hits" value="12 hits in 1161 CRISPR screens"/>
</dbReference>
<dbReference type="ChiTaRS" id="CA14">
    <property type="organism name" value="human"/>
</dbReference>
<dbReference type="EvolutionaryTrace" id="Q9ULX7"/>
<dbReference type="GeneWiki" id="CA14"/>
<dbReference type="GenomeRNAi" id="23632"/>
<dbReference type="Pharos" id="Q9ULX7">
    <property type="development level" value="Tclin"/>
</dbReference>
<dbReference type="PRO" id="PR:Q9ULX7"/>
<dbReference type="Proteomes" id="UP000005640">
    <property type="component" value="Chromosome 1"/>
</dbReference>
<dbReference type="RNAct" id="Q9ULX7">
    <property type="molecule type" value="protein"/>
</dbReference>
<dbReference type="Bgee" id="ENSG00000118298">
    <property type="expression patterns" value="Expressed in pigmented layer of retina and 137 other cell types or tissues"/>
</dbReference>
<dbReference type="ExpressionAtlas" id="Q9ULX7">
    <property type="expression patterns" value="baseline and differential"/>
</dbReference>
<dbReference type="GO" id="GO:0016324">
    <property type="term" value="C:apical plasma membrane"/>
    <property type="evidence" value="ECO:0007669"/>
    <property type="project" value="Ensembl"/>
</dbReference>
<dbReference type="GO" id="GO:0016323">
    <property type="term" value="C:basolateral plasma membrane"/>
    <property type="evidence" value="ECO:0007669"/>
    <property type="project" value="Ensembl"/>
</dbReference>
<dbReference type="GO" id="GO:0016020">
    <property type="term" value="C:membrane"/>
    <property type="evidence" value="ECO:0000304"/>
    <property type="project" value="ProtInc"/>
</dbReference>
<dbReference type="GO" id="GO:0005886">
    <property type="term" value="C:plasma membrane"/>
    <property type="evidence" value="ECO:0000318"/>
    <property type="project" value="GO_Central"/>
</dbReference>
<dbReference type="GO" id="GO:0004089">
    <property type="term" value="F:carbonate dehydratase activity"/>
    <property type="evidence" value="ECO:0000318"/>
    <property type="project" value="GO_Central"/>
</dbReference>
<dbReference type="GO" id="GO:0008270">
    <property type="term" value="F:zinc ion binding"/>
    <property type="evidence" value="ECO:0007669"/>
    <property type="project" value="InterPro"/>
</dbReference>
<dbReference type="CDD" id="cd03126">
    <property type="entry name" value="alpha_CA_XII_XIV"/>
    <property type="match status" value="1"/>
</dbReference>
<dbReference type="FunFam" id="3.10.200.10:FF:000003">
    <property type="entry name" value="Carbonic anhydrase 12"/>
    <property type="match status" value="1"/>
</dbReference>
<dbReference type="Gene3D" id="3.10.200.10">
    <property type="entry name" value="Alpha carbonic anhydrase"/>
    <property type="match status" value="1"/>
</dbReference>
<dbReference type="InterPro" id="IPR001148">
    <property type="entry name" value="CA_dom"/>
</dbReference>
<dbReference type="InterPro" id="IPR036398">
    <property type="entry name" value="CA_dom_sf"/>
</dbReference>
<dbReference type="InterPro" id="IPR023561">
    <property type="entry name" value="Carbonic_anhydrase_a-class"/>
</dbReference>
<dbReference type="PANTHER" id="PTHR18952">
    <property type="entry name" value="CARBONIC ANHYDRASE"/>
    <property type="match status" value="1"/>
</dbReference>
<dbReference type="PANTHER" id="PTHR18952:SF84">
    <property type="entry name" value="CARBONIC ANHYDRASE 14"/>
    <property type="match status" value="1"/>
</dbReference>
<dbReference type="Pfam" id="PF00194">
    <property type="entry name" value="Carb_anhydrase"/>
    <property type="match status" value="1"/>
</dbReference>
<dbReference type="SMART" id="SM01057">
    <property type="entry name" value="Carb_anhydrase"/>
    <property type="match status" value="1"/>
</dbReference>
<dbReference type="SUPFAM" id="SSF51069">
    <property type="entry name" value="Carbonic anhydrase"/>
    <property type="match status" value="1"/>
</dbReference>
<dbReference type="PROSITE" id="PS51144">
    <property type="entry name" value="ALPHA_CA_2"/>
    <property type="match status" value="1"/>
</dbReference>